<reference key="1">
    <citation type="journal article" date="2009" name="Genome Biol.">
        <title>A whole-genome assembly of the domestic cow, Bos taurus.</title>
        <authorList>
            <person name="Zimin A.V."/>
            <person name="Delcher A.L."/>
            <person name="Florea L."/>
            <person name="Kelley D.R."/>
            <person name="Schatz M.C."/>
            <person name="Puiu D."/>
            <person name="Hanrahan F."/>
            <person name="Pertea G."/>
            <person name="Van Tassell C.P."/>
            <person name="Sonstegard T.S."/>
            <person name="Marcais G."/>
            <person name="Roberts M."/>
            <person name="Subramanian P."/>
            <person name="Yorke J.A."/>
            <person name="Salzberg S.L."/>
        </authorList>
    </citation>
    <scope>NUCLEOTIDE SEQUENCE [LARGE SCALE GENOMIC DNA]</scope>
    <source>
        <strain>Hereford</strain>
    </source>
</reference>
<reference key="2">
    <citation type="submission" date="2007-08" db="EMBL/GenBank/DDBJ databases">
        <authorList>
            <consortium name="NIH - Mammalian Gene Collection (MGC) project"/>
        </authorList>
    </citation>
    <scope>NUCLEOTIDE SEQUENCE [LARGE SCALE MRNA]</scope>
    <source>
        <strain>Hereford</strain>
        <tissue>Fetal skin</tissue>
    </source>
</reference>
<evidence type="ECO:0000250" key="1"/>
<evidence type="ECO:0000250" key="2">
    <source>
        <dbReference type="UniProtKB" id="Q7TPK1"/>
    </source>
</evidence>
<evidence type="ECO:0000250" key="3">
    <source>
        <dbReference type="UniProtKB" id="Q8VDF2"/>
    </source>
</evidence>
<evidence type="ECO:0000250" key="4">
    <source>
        <dbReference type="UniProtKB" id="Q96T88"/>
    </source>
</evidence>
<evidence type="ECO:0000255" key="5">
    <source>
        <dbReference type="PROSITE-ProRule" id="PRU00146"/>
    </source>
</evidence>
<evidence type="ECO:0000255" key="6">
    <source>
        <dbReference type="PROSITE-ProRule" id="PRU00175"/>
    </source>
</evidence>
<evidence type="ECO:0000255" key="7">
    <source>
        <dbReference type="PROSITE-ProRule" id="PRU00214"/>
    </source>
</evidence>
<evidence type="ECO:0000255" key="8">
    <source>
        <dbReference type="PROSITE-ProRule" id="PRU00358"/>
    </source>
</evidence>
<evidence type="ECO:0000256" key="9">
    <source>
        <dbReference type="SAM" id="MobiDB-lite"/>
    </source>
</evidence>
<protein>
    <recommendedName>
        <fullName>E3 ubiquitin-protein ligase UHRF1</fullName>
        <ecNumber>2.3.2.27</ecNumber>
    </recommendedName>
    <alternativeName>
        <fullName>RING-type E3 ubiquitin transferase UHRF1</fullName>
    </alternativeName>
    <alternativeName>
        <fullName>Ubiquitin-like PHD and RING finger domain-containing protein 1</fullName>
    </alternativeName>
    <alternativeName>
        <fullName>Ubiquitin-like-containing PHD and RING finger domains protein 1</fullName>
    </alternativeName>
</protein>
<keyword id="KW-0007">Acetylation</keyword>
<keyword id="KW-0131">Cell cycle</keyword>
<keyword id="KW-0156">Chromatin regulator</keyword>
<keyword id="KW-0227">DNA damage</keyword>
<keyword id="KW-0234">DNA repair</keyword>
<keyword id="KW-0238">DNA-binding</keyword>
<keyword id="KW-1017">Isopeptide bond</keyword>
<keyword id="KW-0479">Metal-binding</keyword>
<keyword id="KW-0539">Nucleus</keyword>
<keyword id="KW-0597">Phosphoprotein</keyword>
<keyword id="KW-1185">Reference proteome</keyword>
<keyword id="KW-0677">Repeat</keyword>
<keyword id="KW-0678">Repressor</keyword>
<keyword id="KW-0804">Transcription</keyword>
<keyword id="KW-0805">Transcription regulation</keyword>
<keyword id="KW-0808">Transferase</keyword>
<keyword id="KW-0832">Ubl conjugation</keyword>
<keyword id="KW-0833">Ubl conjugation pathway</keyword>
<keyword id="KW-0862">Zinc</keyword>
<keyword id="KW-0863">Zinc-finger</keyword>
<accession>A7E320</accession>
<accession>F1MY11</accession>
<proteinExistence type="evidence at transcript level"/>
<name>UHRF1_BOVIN</name>
<organism>
    <name type="scientific">Bos taurus</name>
    <name type="common">Bovine</name>
    <dbReference type="NCBI Taxonomy" id="9913"/>
    <lineage>
        <taxon>Eukaryota</taxon>
        <taxon>Metazoa</taxon>
        <taxon>Chordata</taxon>
        <taxon>Craniata</taxon>
        <taxon>Vertebrata</taxon>
        <taxon>Euteleostomi</taxon>
        <taxon>Mammalia</taxon>
        <taxon>Eutheria</taxon>
        <taxon>Laurasiatheria</taxon>
        <taxon>Artiodactyla</taxon>
        <taxon>Ruminantia</taxon>
        <taxon>Pecora</taxon>
        <taxon>Bovidae</taxon>
        <taxon>Bovinae</taxon>
        <taxon>Bos</taxon>
    </lineage>
</organism>
<gene>
    <name type="primary">UHRF1</name>
</gene>
<feature type="chain" id="PRO_0000419987" description="E3 ubiquitin-protein ligase UHRF1">
    <location>
        <begin position="1"/>
        <end position="786"/>
    </location>
</feature>
<feature type="domain" description="Ubiquitin-like" evidence="7">
    <location>
        <begin position="1"/>
        <end position="78"/>
    </location>
</feature>
<feature type="domain" description="YDG" evidence="8">
    <location>
        <begin position="423"/>
        <end position="586"/>
    </location>
</feature>
<feature type="zinc finger region" description="PHD-type" evidence="5">
    <location>
        <begin position="303"/>
        <end position="370"/>
    </location>
</feature>
<feature type="zinc finger region" description="RING-type" evidence="6">
    <location>
        <begin position="717"/>
        <end position="756"/>
    </location>
</feature>
<feature type="region of interest" description="Disordered" evidence="9">
    <location>
        <begin position="82"/>
        <end position="134"/>
    </location>
</feature>
<feature type="region of interest" description="Tudor-like 1">
    <location>
        <begin position="139"/>
        <end position="213"/>
    </location>
</feature>
<feature type="region of interest" description="Tudor-like 2">
    <location>
        <begin position="220"/>
        <end position="287"/>
    </location>
</feature>
<feature type="region of interest" description="Linker" evidence="1">
    <location>
        <begin position="300"/>
        <end position="305"/>
    </location>
</feature>
<feature type="region of interest" description="Histone H3R2me0 binding" evidence="1">
    <location>
        <begin position="337"/>
        <end position="341"/>
    </location>
</feature>
<feature type="region of interest" description="Histone H3R2me0 binding" evidence="1">
    <location>
        <begin position="357"/>
        <end position="359"/>
    </location>
</feature>
<feature type="region of interest" description="Required to promote base flipping" evidence="1">
    <location>
        <begin position="449"/>
        <end position="450"/>
    </location>
</feature>
<feature type="region of interest" description="Required for formation of a 5-methylcytosine-binding pocket" evidence="1">
    <location>
        <begin position="470"/>
        <end position="473"/>
    </location>
</feature>
<feature type="region of interest" description="Required for formation of a 5-methylcytosine-binding pocket" evidence="1">
    <location>
        <begin position="482"/>
        <end position="485"/>
    </location>
</feature>
<feature type="region of interest" description="Disordered" evidence="9">
    <location>
        <begin position="626"/>
        <end position="679"/>
    </location>
</feature>
<feature type="binding site" evidence="1">
    <location>
        <begin position="467"/>
        <end position="468"/>
    </location>
    <ligand>
        <name>DNA</name>
        <dbReference type="ChEBI" id="CHEBI:16991"/>
    </ligand>
    <ligandPart>
        <name>5-methylcytosine group</name>
        <dbReference type="ChEBI" id="CHEBI:65274"/>
    </ligandPart>
</feature>
<feature type="binding site" evidence="1">
    <location>
        <position position="473"/>
    </location>
    <ligand>
        <name>DNA</name>
        <dbReference type="ChEBI" id="CHEBI:16991"/>
    </ligand>
    <ligandPart>
        <name>5-methylcytosine group</name>
        <dbReference type="ChEBI" id="CHEBI:65274"/>
    </ligandPart>
</feature>
<feature type="site" description="Histone H3K4me0 binding" evidence="1">
    <location>
        <position position="320"/>
    </location>
</feature>
<feature type="site" description="Histone H3R2me0 binding" evidence="1">
    <location>
        <position position="331"/>
    </location>
</feature>
<feature type="site" description="Histone H3R2me0 binding" evidence="1">
    <location>
        <position position="334"/>
    </location>
</feature>
<feature type="site" description="Required to confer preferential recognition of cytosine over thymine" evidence="1">
    <location>
        <position position="483"/>
    </location>
</feature>
<feature type="site" description="Required to discriminate between hemimethylated DNA versus symmetrically methylated DNA" evidence="1">
    <location>
        <position position="493"/>
    </location>
</feature>
<feature type="site" description="Required for affinity and specificity for 5-mCpG sequence" evidence="1">
    <location>
        <position position="495"/>
    </location>
</feature>
<feature type="modified residue" description="Phosphoserine" evidence="4">
    <location>
        <position position="76"/>
    </location>
</feature>
<feature type="modified residue" description="Phosphoserine" evidence="4">
    <location>
        <position position="98"/>
    </location>
</feature>
<feature type="modified residue" description="Phosphoserine" evidence="2">
    <location>
        <position position="102"/>
    </location>
</feature>
<feature type="modified residue" description="Phosphoserine; by PKA" evidence="4">
    <location>
        <position position="302"/>
    </location>
</feature>
<feature type="modified residue" description="Phosphoserine" evidence="4">
    <location>
        <position position="372"/>
    </location>
</feature>
<feature type="modified residue" description="N6-acetyllysine" evidence="4">
    <location>
        <position position="403"/>
    </location>
</feature>
<feature type="modified residue" description="N6-acetyllysine; alternate" evidence="4">
    <location>
        <position position="550"/>
    </location>
</feature>
<feature type="modified residue" description="Phosphoserine; by CDK1" evidence="4">
    <location>
        <position position="645"/>
    </location>
</feature>
<feature type="modified residue" description="Phosphoserine" evidence="4">
    <location>
        <position position="655"/>
    </location>
</feature>
<feature type="modified residue" description="Phosphoserine" evidence="3">
    <location>
        <position position="662"/>
    </location>
</feature>
<feature type="cross-link" description="Glycyl lysine isopeptide (Lys-Gly) (interchain with G-Cter in SUMO2)" evidence="4">
    <location>
        <position position="283"/>
    </location>
</feature>
<feature type="cross-link" description="Glycyl lysine isopeptide (Lys-Gly) (interchain with G-Cter in SUMO2)" evidence="4">
    <location>
        <position position="389"/>
    </location>
</feature>
<feature type="cross-link" description="Glycyl lysine isopeptide (Lys-Gly) (interchain with G-Cter in SUMO2); alternate" evidence="4">
    <location>
        <position position="550"/>
    </location>
</feature>
<feature type="cross-link" description="Glycyl lysine isopeptide (Lys-Gly) (interchain with G-Cter in SUMO2)" evidence="4">
    <location>
        <position position="670"/>
    </location>
</feature>
<dbReference type="EC" id="2.3.2.27"/>
<dbReference type="EMBL" id="DAAA02019593">
    <property type="status" value="NOT_ANNOTATED_CDS"/>
    <property type="molecule type" value="Genomic_DNA"/>
</dbReference>
<dbReference type="EMBL" id="DAAA02019594">
    <property type="status" value="NOT_ANNOTATED_CDS"/>
    <property type="molecule type" value="Genomic_DNA"/>
</dbReference>
<dbReference type="EMBL" id="BC151671">
    <property type="protein sequence ID" value="AAI51672.1"/>
    <property type="molecule type" value="mRNA"/>
</dbReference>
<dbReference type="RefSeq" id="NP_001096568.1">
    <property type="nucleotide sequence ID" value="NM_001103098.1"/>
</dbReference>
<dbReference type="RefSeq" id="XP_010805284.2">
    <property type="nucleotide sequence ID" value="XM_010806982.3"/>
</dbReference>
<dbReference type="RefSeq" id="XP_059744214.1">
    <property type="nucleotide sequence ID" value="XM_059888231.1"/>
</dbReference>
<dbReference type="SMR" id="A7E320"/>
<dbReference type="FunCoup" id="A7E320">
    <property type="interactions" value="576"/>
</dbReference>
<dbReference type="STRING" id="9913.ENSBTAP00000042353"/>
<dbReference type="PaxDb" id="9913-ENSBTAP00000042353"/>
<dbReference type="Ensembl" id="ENSBTAT00000044908.4">
    <property type="protein sequence ID" value="ENSBTAP00000042353.3"/>
    <property type="gene ID" value="ENSBTAG00000002224.7"/>
</dbReference>
<dbReference type="GeneID" id="530411"/>
<dbReference type="KEGG" id="bta:530411"/>
<dbReference type="CTD" id="29128"/>
<dbReference type="VEuPathDB" id="HostDB:ENSBTAG00000002224"/>
<dbReference type="VGNC" id="VGNC:36654">
    <property type="gene designation" value="UHRF1"/>
</dbReference>
<dbReference type="eggNOG" id="ENOG502QRDQ">
    <property type="taxonomic scope" value="Eukaryota"/>
</dbReference>
<dbReference type="GeneTree" id="ENSGT00390000008296"/>
<dbReference type="HOGENOM" id="CLU_022357_0_0_1"/>
<dbReference type="InParanoid" id="A7E320"/>
<dbReference type="OMA" id="CQHNICK"/>
<dbReference type="OrthoDB" id="2270193at2759"/>
<dbReference type="TreeFam" id="TF106434"/>
<dbReference type="UniPathway" id="UPA00143"/>
<dbReference type="Proteomes" id="UP000009136">
    <property type="component" value="Chromosome 7"/>
</dbReference>
<dbReference type="Bgee" id="ENSBTAG00000002224">
    <property type="expression patterns" value="Expressed in oocyte and 102 other cell types or tissues"/>
</dbReference>
<dbReference type="GO" id="GO:0000785">
    <property type="term" value="C:chromatin"/>
    <property type="evidence" value="ECO:0000250"/>
    <property type="project" value="UniProtKB"/>
</dbReference>
<dbReference type="GO" id="GO:0000791">
    <property type="term" value="C:euchromatin"/>
    <property type="evidence" value="ECO:0000250"/>
    <property type="project" value="UniProtKB"/>
</dbReference>
<dbReference type="GO" id="GO:0000792">
    <property type="term" value="C:heterochromatin"/>
    <property type="evidence" value="ECO:0000250"/>
    <property type="project" value="UniProtKB"/>
</dbReference>
<dbReference type="GO" id="GO:0005634">
    <property type="term" value="C:nucleus"/>
    <property type="evidence" value="ECO:0007669"/>
    <property type="project" value="UniProtKB-SubCell"/>
</dbReference>
<dbReference type="GO" id="GO:0005657">
    <property type="term" value="C:replication fork"/>
    <property type="evidence" value="ECO:0000250"/>
    <property type="project" value="UniProtKB"/>
</dbReference>
<dbReference type="GO" id="GO:0044729">
    <property type="term" value="F:hemi-methylated DNA-binding"/>
    <property type="evidence" value="ECO:0000250"/>
    <property type="project" value="UniProtKB"/>
</dbReference>
<dbReference type="GO" id="GO:0042393">
    <property type="term" value="F:histone binding"/>
    <property type="evidence" value="ECO:0000250"/>
    <property type="project" value="UniProtKB"/>
</dbReference>
<dbReference type="GO" id="GO:0062072">
    <property type="term" value="F:histone H3K9me2/3 reader activity"/>
    <property type="evidence" value="ECO:0000250"/>
    <property type="project" value="UniProtKB"/>
</dbReference>
<dbReference type="GO" id="GO:0061630">
    <property type="term" value="F:ubiquitin protein ligase activity"/>
    <property type="evidence" value="ECO:0000318"/>
    <property type="project" value="GO_Central"/>
</dbReference>
<dbReference type="GO" id="GO:0004842">
    <property type="term" value="F:ubiquitin-protein transferase activity"/>
    <property type="evidence" value="ECO:0000250"/>
    <property type="project" value="UniProtKB"/>
</dbReference>
<dbReference type="GO" id="GO:0008270">
    <property type="term" value="F:zinc ion binding"/>
    <property type="evidence" value="ECO:0000250"/>
    <property type="project" value="UniProtKB"/>
</dbReference>
<dbReference type="GO" id="GO:0006281">
    <property type="term" value="P:DNA repair"/>
    <property type="evidence" value="ECO:0007669"/>
    <property type="project" value="UniProtKB-KW"/>
</dbReference>
<dbReference type="GO" id="GO:0031507">
    <property type="term" value="P:heterochromatin formation"/>
    <property type="evidence" value="ECO:0000250"/>
    <property type="project" value="UniProtKB"/>
</dbReference>
<dbReference type="GO" id="GO:0044027">
    <property type="term" value="P:negative regulation of gene expression via chromosomal CpG island methylation"/>
    <property type="evidence" value="ECO:0000250"/>
    <property type="project" value="UniProtKB"/>
</dbReference>
<dbReference type="GO" id="GO:0000122">
    <property type="term" value="P:negative regulation of transcription by RNA polymerase II"/>
    <property type="evidence" value="ECO:0000250"/>
    <property type="project" value="UniProtKB"/>
</dbReference>
<dbReference type="GO" id="GO:0016567">
    <property type="term" value="P:protein ubiquitination"/>
    <property type="evidence" value="ECO:0000318"/>
    <property type="project" value="GO_Central"/>
</dbReference>
<dbReference type="GO" id="GO:0006511">
    <property type="term" value="P:ubiquitin-dependent protein catabolic process"/>
    <property type="evidence" value="ECO:0000250"/>
    <property type="project" value="UniProtKB"/>
</dbReference>
<dbReference type="CDD" id="cd15616">
    <property type="entry name" value="PHD_UHRF1"/>
    <property type="match status" value="1"/>
</dbReference>
<dbReference type="CDD" id="cd16769">
    <property type="entry name" value="RING-HC_UHRF1"/>
    <property type="match status" value="1"/>
</dbReference>
<dbReference type="CDD" id="cd20455">
    <property type="entry name" value="Tudor_UHRF1_rpt1"/>
    <property type="match status" value="1"/>
</dbReference>
<dbReference type="CDD" id="cd20457">
    <property type="entry name" value="Tudor_UHRF1_rpt2"/>
    <property type="match status" value="1"/>
</dbReference>
<dbReference type="CDD" id="cd17122">
    <property type="entry name" value="Ubl_UHRF1"/>
    <property type="match status" value="1"/>
</dbReference>
<dbReference type="FunFam" id="2.30.280.10:FF:000001">
    <property type="entry name" value="E3 ubiquitin-protein ligase UHRF1 isoform 1"/>
    <property type="match status" value="1"/>
</dbReference>
<dbReference type="FunFam" id="2.30.30.140:FF:000068">
    <property type="entry name" value="E3 ubiquitin-protein ligase UHRF1 isoform 1"/>
    <property type="match status" value="1"/>
</dbReference>
<dbReference type="FunFam" id="3.10.20.90:FF:000143">
    <property type="entry name" value="E3 ubiquitin-protein ligase UHRF1 isoform 1"/>
    <property type="match status" value="1"/>
</dbReference>
<dbReference type="FunFam" id="2.30.30.1150:FF:000001">
    <property type="entry name" value="E3 ubiquitin-protein ligase UHRF2 isoform X1"/>
    <property type="match status" value="1"/>
</dbReference>
<dbReference type="FunFam" id="3.30.40.10:FF:000066">
    <property type="entry name" value="E3 ubiquitin-protein ligase UHRF2 isoform X1"/>
    <property type="match status" value="1"/>
</dbReference>
<dbReference type="Gene3D" id="2.30.30.1150">
    <property type="match status" value="1"/>
</dbReference>
<dbReference type="Gene3D" id="2.30.30.140">
    <property type="match status" value="1"/>
</dbReference>
<dbReference type="Gene3D" id="3.10.20.90">
    <property type="entry name" value="Phosphatidylinositol 3-kinase Catalytic Subunit, Chain A, domain 1"/>
    <property type="match status" value="1"/>
</dbReference>
<dbReference type="Gene3D" id="2.30.280.10">
    <property type="entry name" value="SRA-YDG"/>
    <property type="match status" value="1"/>
</dbReference>
<dbReference type="Gene3D" id="3.30.40.10">
    <property type="entry name" value="Zinc/RING finger domain, C3HC4 (zinc finger)"/>
    <property type="match status" value="1"/>
</dbReference>
<dbReference type="InterPro" id="IPR015947">
    <property type="entry name" value="PUA-like_sf"/>
</dbReference>
<dbReference type="InterPro" id="IPR036987">
    <property type="entry name" value="SRA-YDG_sf"/>
</dbReference>
<dbReference type="InterPro" id="IPR003105">
    <property type="entry name" value="SRA_YDG"/>
</dbReference>
<dbReference type="InterPro" id="IPR021991">
    <property type="entry name" value="TTD_dom"/>
</dbReference>
<dbReference type="InterPro" id="IPR000626">
    <property type="entry name" value="Ubiquitin-like_dom"/>
</dbReference>
<dbReference type="InterPro" id="IPR029071">
    <property type="entry name" value="Ubiquitin-like_domsf"/>
</dbReference>
<dbReference type="InterPro" id="IPR047406">
    <property type="entry name" value="Ubl_UHRF1"/>
</dbReference>
<dbReference type="InterPro" id="IPR045134">
    <property type="entry name" value="UHRF1/2-like"/>
</dbReference>
<dbReference type="InterPro" id="IPR011011">
    <property type="entry name" value="Znf_FYVE_PHD"/>
</dbReference>
<dbReference type="InterPro" id="IPR001965">
    <property type="entry name" value="Znf_PHD"/>
</dbReference>
<dbReference type="InterPro" id="IPR019787">
    <property type="entry name" value="Znf_PHD-finger"/>
</dbReference>
<dbReference type="InterPro" id="IPR001841">
    <property type="entry name" value="Znf_RING"/>
</dbReference>
<dbReference type="InterPro" id="IPR013083">
    <property type="entry name" value="Znf_RING/FYVE/PHD"/>
</dbReference>
<dbReference type="InterPro" id="IPR017907">
    <property type="entry name" value="Znf_RING_CS"/>
</dbReference>
<dbReference type="PANTHER" id="PTHR14140">
    <property type="entry name" value="E3 UBIQUITIN-PROTEIN LIGASE UHRF-RELATED"/>
    <property type="match status" value="1"/>
</dbReference>
<dbReference type="PANTHER" id="PTHR14140:SF2">
    <property type="entry name" value="E3 UBIQUITIN-PROTEIN LIGASE UHRF1"/>
    <property type="match status" value="1"/>
</dbReference>
<dbReference type="Pfam" id="PF00628">
    <property type="entry name" value="PHD"/>
    <property type="match status" value="1"/>
</dbReference>
<dbReference type="Pfam" id="PF02182">
    <property type="entry name" value="SAD_SRA"/>
    <property type="match status" value="1"/>
</dbReference>
<dbReference type="Pfam" id="PF12148">
    <property type="entry name" value="TTD"/>
    <property type="match status" value="1"/>
</dbReference>
<dbReference type="Pfam" id="PF00240">
    <property type="entry name" value="ubiquitin"/>
    <property type="match status" value="1"/>
</dbReference>
<dbReference type="SMART" id="SM00249">
    <property type="entry name" value="PHD"/>
    <property type="match status" value="1"/>
</dbReference>
<dbReference type="SMART" id="SM00184">
    <property type="entry name" value="RING"/>
    <property type="match status" value="2"/>
</dbReference>
<dbReference type="SMART" id="SM00466">
    <property type="entry name" value="SRA"/>
    <property type="match status" value="1"/>
</dbReference>
<dbReference type="SMART" id="SM00213">
    <property type="entry name" value="UBQ"/>
    <property type="match status" value="1"/>
</dbReference>
<dbReference type="SUPFAM" id="SSF57903">
    <property type="entry name" value="FYVE/PHD zinc finger"/>
    <property type="match status" value="1"/>
</dbReference>
<dbReference type="SUPFAM" id="SSF88697">
    <property type="entry name" value="PUA domain-like"/>
    <property type="match status" value="1"/>
</dbReference>
<dbReference type="SUPFAM" id="SSF57850">
    <property type="entry name" value="RING/U-box"/>
    <property type="match status" value="1"/>
</dbReference>
<dbReference type="SUPFAM" id="SSF54236">
    <property type="entry name" value="Ubiquitin-like"/>
    <property type="match status" value="1"/>
</dbReference>
<dbReference type="PROSITE" id="PS50053">
    <property type="entry name" value="UBIQUITIN_2"/>
    <property type="match status" value="1"/>
</dbReference>
<dbReference type="PROSITE" id="PS51015">
    <property type="entry name" value="YDG"/>
    <property type="match status" value="1"/>
</dbReference>
<dbReference type="PROSITE" id="PS01359">
    <property type="entry name" value="ZF_PHD_1"/>
    <property type="match status" value="1"/>
</dbReference>
<dbReference type="PROSITE" id="PS50016">
    <property type="entry name" value="ZF_PHD_2"/>
    <property type="match status" value="1"/>
</dbReference>
<dbReference type="PROSITE" id="PS00518">
    <property type="entry name" value="ZF_RING_1"/>
    <property type="match status" value="1"/>
</dbReference>
<dbReference type="PROSITE" id="PS50089">
    <property type="entry name" value="ZF_RING_2"/>
    <property type="match status" value="1"/>
</dbReference>
<sequence>MWIQVRTMDGKVAHTVDSLSRLTKVEELRKKIQELFHVEPGLQRLFYRGKQMEDGHTLFDYDVRLNDTIQLLVRQSLVLPVPVPSSSGGSKERDSELSDTDSGCGLAQSESDKSSNSGEAANEPEGKADEDECDETELGLYKVGEYVDARDTNMGAWFEAKVIRVTRKAPAHDQPSSSSSKPEDDIIYHVTYDDYPENGVVQMTSQNVRARARHTIKWEDLQVGQVVMVNYNPDLPKDRGFWYDAEILRKRETRTARELHANVRIGGDSLNDCRIVFVDEVFKIERPGEGNPMVENPMRRKSGPSCKHCKDDERKLCRMCACHVCGGKQDPDKQLMCDECDMAFHIYCLRPPLSSVPPEEEWYCPDCRIDSSEVVQAGEKLKESKKKAKMASATSSSQRDWGKGMACVGRTKECTIVPSNHFGPIPGIPVGTMWRFRVQVSESGVHRPHVAGIHGRSNHGAYSLVLAGGYEDDVDHGNSFTYTGSGGRDLSGNKRTAEQSCDQKLTNTNRALALNCFAPINDLKGAEAKDWRSGKPVRVVRNVKGRKHSKYAPIEGNRYDGIYKVVRYWPEKGKSGFLVWRFLLRRDDVEPGPWTKEGKDRIKKLGLTMQYPEGYLEALARKEKENSKQAALDKEEEDGEEGFTSPRKGKRKSKSAGGDGSSRGTPKKTKVEPYSLTTQQSSLIKEDKSNMKLWTEILKSLKDGPKFLSKVEETFQCICCQELVFRPITTVCQHNVCKDCLDRSFKAQVFSCPACRYDLGRSYAMTVNQPLQAVLSQLFPGYGSGR</sequence>
<comment type="function">
    <text evidence="4">Multidomain protein that acts as a key epigenetic regulator by bridging DNA methylation and chromatin modification. Specifically recognizes and binds hemimethylated DNA at replication forks via its YDG domain and recruits DNMT1 methyltransferase to ensure faithful propagation of the DNA methylation patterns through DNA replication. In addition to its role in maintenance of DNA methylation, also plays a key role in chromatin modification: through its tudor-like regions and PHD-type zinc fingers, specifically recognizes and binds histone H3 trimethylated at 'Lys-9' (H3K9me3) and unmethylated at 'Arg-2' (H3R2me0), respectively, and recruits chromatin proteins. Enriched in pericentric heterochromatin where it recruits different chromatin modifiers required for this chromatin replication. Also localizes to euchromatic regions where it negatively regulates transcription possibly by impacting DNA methylation and histone modifications. Has E3 ubiquitin-protein ligase activity by mediating the ubiquitination of target proteins such as histone H3 and PML. It is still unclear how E3 ubiquitin-protein ligase activity is related to its role in chromatin in vivo. Plays a role in DNA repair by cooperating with UHRF2 to ensure recruitment of FANCD2 to interstrand cross-links (ICLs) leading to FANCD2 activation. Plays a pivotal role in the establishment of correct spindle architecture by catalyzing the 'Lys-63'-linked ubiquitination of KIF11, thereby controlling KIF11 localization on the spindle.</text>
</comment>
<comment type="catalytic activity">
    <reaction evidence="4">
        <text>S-ubiquitinyl-[E2 ubiquitin-conjugating enzyme]-L-cysteine + [acceptor protein]-L-lysine = [E2 ubiquitin-conjugating enzyme]-L-cysteine + N(6)-ubiquitinyl-[acceptor protein]-L-lysine.</text>
        <dbReference type="EC" id="2.3.2.27"/>
    </reaction>
</comment>
<comment type="pathway">
    <text>Protein modification; protein ubiquitination.</text>
</comment>
<comment type="subunit">
    <text evidence="1 3 4">Interacts with DNMT3A and DNMT3B. Interacts with DNMT1; the interaction is direct. Interacts with USP7; leading to its deubiquitination. Interacts with histone H3. Interacts with HDAC1, but not with HDAC2. Interacts with BLTP3A. Interacts with PML. Interacts with EHMT2. Binds methylated CpG containing oligonucleotides (By similarity). Interacts with ZNF263; recruited to the SIX3 promoter along with other proteins involved in chromatin modification and transcriptional corepression where it contributes to transcriptional repression (By similarity). Interacts with UHRF2 (By similarity). Interacts with FANCD2 (By similarity). Interacts with TET1 isoform 2; this interaction induces the recruitment of TET1 isoform 2 to replicating heterochromatin (By similarity).</text>
</comment>
<comment type="subcellular location">
    <subcellularLocation>
        <location evidence="3 8">Nucleus</location>
    </subcellularLocation>
    <text evidence="1 3">Associated, through the YDG domain (also called SRA domain), with replicating DNA from early to late S phase, including at replicating pericentric heterochromatin (By similarity). Also localizes to euchromatic regions. In non-S-phase cells, homogenously distributed through the nucleus (By similarity).</text>
</comment>
<comment type="domain">
    <text evidence="1">The tudor-like regions specifically recognize and bind histone H3 unmethylated at 'Arg-2' (H3R2me0), while the PHD-type zinc finger specifically recognizes and binds histone H3 trimethylated at 'Lys-9' (H3K9me3). The tudor-like regions simultaneously recognizes H3K9me3 through a conserved aromatic cage in the first tudor-like subdomain and unmodified H3K4 (H3K4me0) within a groove between the tandem subdomains. The linker region plays a role in the formation of a histone H3-binding hole between the reader modules formed by the tudor-like regions and the PHD-type zinc finger by making extended contacts with the tandem tudor-like regions (By similarity).</text>
</comment>
<comment type="domain">
    <text evidence="1">The YDG domain (also named SRA domain) specifically recognizes and binds hemimethylated DNA at replication forks (DNA that is only methylated on the mother strand of replicating DNA). It contains a binding pocket that accommodates the 5-methylcytosine that is flipped out of the duplex DNA. 2 specialized loops reach through the resulting gap in the DNA from both the major and the minor grooves to read the other 3 bases of the CpG duplex. The major groove loop confers both specificity for the CpG dinucleotide and discrimination against methylation of deoxycytidine of the complementary strand. The YDG domain also recognizes and binds 5-hydroxymethylcytosine (5hmC) (By similarity).</text>
</comment>
<comment type="domain">
    <text evidence="1">The RING finger is required for ubiquitin ligase activity.</text>
</comment>
<comment type="PTM">
    <text evidence="1">Phosphorylation at Ser-302 of the linker region decreases the binding to H3K9me3. Phosphorylation at Ser-645 by CDK1 during M phase impairs interaction with USP7, preventing deubiquitination and leading to degradation by the proteasome (By similarity).</text>
</comment>
<comment type="PTM">
    <text evidence="1">Ubiquitinated; which leads to proteasomal degradation. Autoubiquitinated; interaction with USP7 leads to deubiquitination and prevents degradation. Ubiquitination and degradation takes place during M phase, when phosphorylation at Ser-645 prevents interaction with USP7 and subsequent deubiquitination. Polyubiquitination may be stimulated by DNA damage (By similarity).</text>
</comment>